<comment type="function">
    <text evidence="1">Plays an essential role in viral DNA replication by acting as the polymerase accessory subunit. Associates with the viral polymerase to increase its processivity and forms high-affinity direct interactions with DNA. Facilitates the origin-binding protein loading onto DNA thus increasing its ability to assemble into a functional complex capable of unwinding duplex DNA (By similarity).</text>
</comment>
<comment type="subunit">
    <text evidence="1">Interacts with the DNA polymerase catalytic subunit. Interacts with the origin-binding protein (By similarity).</text>
</comment>
<comment type="subcellular location">
    <subcellularLocation>
        <location evidence="1">Host nucleus</location>
    </subcellularLocation>
</comment>
<comment type="similarity">
    <text evidence="2">Belongs to the herpesviridae DNA polymerase processivity factor family.</text>
</comment>
<gene>
    <name type="ORF">ORF16</name>
</gene>
<name>PAP_VZVD</name>
<feature type="chain" id="PRO_0000116068" description="DNA polymerase processivity factor">
    <location>
        <begin position="1"/>
        <end position="408"/>
    </location>
</feature>
<feature type="short sequence motif" description="Nuclear localization signal" evidence="1">
    <location>
        <begin position="344"/>
        <end position="353"/>
    </location>
</feature>
<organism>
    <name type="scientific">Varicella-zoster virus (strain Dumas)</name>
    <name type="common">HHV-3</name>
    <name type="synonym">Human herpesvirus 3</name>
    <dbReference type="NCBI Taxonomy" id="10338"/>
    <lineage>
        <taxon>Viruses</taxon>
        <taxon>Duplodnaviria</taxon>
        <taxon>Heunggongvirae</taxon>
        <taxon>Peploviricota</taxon>
        <taxon>Herviviricetes</taxon>
        <taxon>Herpesvirales</taxon>
        <taxon>Orthoherpesviridae</taxon>
        <taxon>Alphaherpesvirinae</taxon>
        <taxon>Varicellovirus</taxon>
        <taxon>Varicellovirus humanalpha3</taxon>
        <taxon>Human herpesvirus 3</taxon>
    </lineage>
</organism>
<reference key="1">
    <citation type="journal article" date="1986" name="J. Gen. Virol.">
        <title>The complete DNA sequence of varicella-zoster virus.</title>
        <authorList>
            <person name="Davison A.J."/>
            <person name="Scott J.E."/>
        </authorList>
    </citation>
    <scope>NUCLEOTIDE SEQUENCE [LARGE SCALE GENOMIC DNA]</scope>
</reference>
<evidence type="ECO:0000250" key="1"/>
<evidence type="ECO:0000305" key="2"/>
<proteinExistence type="inferred from homology"/>
<keyword id="KW-0235">DNA replication</keyword>
<keyword id="KW-0238">DNA-binding</keyword>
<keyword id="KW-1048">Host nucleus</keyword>
<keyword id="KW-1185">Reference proteome</keyword>
<protein>
    <recommendedName>
        <fullName>DNA polymerase processivity factor</fullName>
    </recommendedName>
    <alternativeName>
        <fullName>DNA-binding gene 16 protein</fullName>
    </alternativeName>
    <alternativeName>
        <fullName>Polymerase accessory protein</fullName>
        <shortName>PAP</shortName>
    </alternativeName>
</protein>
<organismHost>
    <name type="scientific">Homo sapiens</name>
    <name type="common">Human</name>
    <dbReference type="NCBI Taxonomy" id="9606"/>
</organismHost>
<sequence length="408" mass="46090">MDLRSRTDDALDMELHAGFDAPEIARAVLTEKTLTGLISSISPLVNRLRDSILIFSDEGLIIHCSLETEQLYIPIPANMFDQYNWTGPRMVVLAATEGRSSLIDAFRHTKDPSTPTRLYFKFTGQPPERSIIQTMVWQRPGDCGPDDQVQCYKQVVKRELACYTMMFPNLTPDISICLKRDQFTRLQRLLKTFGFTTCFILTATDMYIQTAGGGFISFNVSLDINGSKPTPYNLIRSITNSKRILNNVVYGSGSMREFGVLLETHSGFRSAVQNLKLTRDETCYINFYLALTNSPMVGLYIQRSAPVHSFFYATFLSPKDLKEKLTSMQLFANMESVKDEPPLKKRRNLLTKRNEKNTGNKMGGKLPETTWQEGIGIREYCVAPPVDPAGTLDYSELSRESDVICTVK</sequence>
<dbReference type="EMBL" id="X04370">
    <property type="protein sequence ID" value="CAA27899.1"/>
    <property type="molecule type" value="Genomic_DNA"/>
</dbReference>
<dbReference type="PIR" id="G27342">
    <property type="entry name" value="WZBE16"/>
</dbReference>
<dbReference type="SMR" id="P09274"/>
<dbReference type="Proteomes" id="UP000002602">
    <property type="component" value="Genome"/>
</dbReference>
<dbReference type="GO" id="GO:0042025">
    <property type="term" value="C:host cell nucleus"/>
    <property type="evidence" value="ECO:0007669"/>
    <property type="project" value="UniProtKB-SubCell"/>
</dbReference>
<dbReference type="GO" id="GO:0003677">
    <property type="term" value="F:DNA binding"/>
    <property type="evidence" value="ECO:0007669"/>
    <property type="project" value="UniProtKB-KW"/>
</dbReference>
<dbReference type="GO" id="GO:0006260">
    <property type="term" value="P:DNA replication"/>
    <property type="evidence" value="ECO:0007669"/>
    <property type="project" value="UniProtKB-KW"/>
</dbReference>
<dbReference type="Gene3D" id="3.70.10.10">
    <property type="match status" value="1"/>
</dbReference>
<dbReference type="InterPro" id="IPR046938">
    <property type="entry name" value="DNA_clamp_sf"/>
</dbReference>
<dbReference type="InterPro" id="IPR003202">
    <property type="entry name" value="Herpes_UL42"/>
</dbReference>
<dbReference type="Pfam" id="PF02282">
    <property type="entry name" value="Herpes_UL42"/>
    <property type="match status" value="2"/>
</dbReference>
<dbReference type="SUPFAM" id="SSF55979">
    <property type="entry name" value="DNA clamp"/>
    <property type="match status" value="2"/>
</dbReference>
<accession>P09274</accession>